<gene>
    <name evidence="1" type="primary">rsmA</name>
    <name evidence="1" type="synonym">ksgA</name>
    <name type="ordered locus">CAB300</name>
</gene>
<feature type="chain" id="PRO_0000257269" description="Ribosomal RNA small subunit methyltransferase A">
    <location>
        <begin position="1"/>
        <end position="278"/>
    </location>
</feature>
<feature type="binding site" evidence="1">
    <location>
        <position position="27"/>
    </location>
    <ligand>
        <name>S-adenosyl-L-methionine</name>
        <dbReference type="ChEBI" id="CHEBI:59789"/>
    </ligand>
</feature>
<feature type="binding site" evidence="1">
    <location>
        <position position="29"/>
    </location>
    <ligand>
        <name>S-adenosyl-L-methionine</name>
        <dbReference type="ChEBI" id="CHEBI:59789"/>
    </ligand>
</feature>
<feature type="binding site" evidence="1">
    <location>
        <position position="54"/>
    </location>
    <ligand>
        <name>S-adenosyl-L-methionine</name>
        <dbReference type="ChEBI" id="CHEBI:59789"/>
    </ligand>
</feature>
<feature type="binding site" evidence="1">
    <location>
        <position position="75"/>
    </location>
    <ligand>
        <name>S-adenosyl-L-methionine</name>
        <dbReference type="ChEBI" id="CHEBI:59789"/>
    </ligand>
</feature>
<feature type="binding site" evidence="1">
    <location>
        <position position="95"/>
    </location>
    <ligand>
        <name>S-adenosyl-L-methionine</name>
        <dbReference type="ChEBI" id="CHEBI:59789"/>
    </ligand>
</feature>
<feature type="binding site" evidence="1">
    <location>
        <position position="118"/>
    </location>
    <ligand>
        <name>S-adenosyl-L-methionine</name>
        <dbReference type="ChEBI" id="CHEBI:59789"/>
    </ligand>
</feature>
<protein>
    <recommendedName>
        <fullName evidence="1">Ribosomal RNA small subunit methyltransferase A</fullName>
        <ecNumber evidence="1">2.1.1.182</ecNumber>
    </recommendedName>
    <alternativeName>
        <fullName evidence="1">16S rRNA (adenine(1518)-N(6)/adenine(1519)-N(6))-dimethyltransferase</fullName>
    </alternativeName>
    <alternativeName>
        <fullName evidence="1">16S rRNA dimethyladenosine transferase</fullName>
    </alternativeName>
    <alternativeName>
        <fullName evidence="1">16S rRNA dimethylase</fullName>
    </alternativeName>
    <alternativeName>
        <fullName evidence="1">S-adenosylmethionine-6-N', N'-adenosyl(rRNA) dimethyltransferase</fullName>
    </alternativeName>
</protein>
<proteinExistence type="inferred from homology"/>
<sequence length="278" mass="31333">MSRSSPEQLSRFLAEVHGRPKKGLSQNFLIDGNILRKILAVSCVQAGDWVLEIGPGFGALTEVLVNQGAHVVALEKDSMLEETLKQLPIHLEITDACKYPLSQLQDQGWQGKGRVVANLPYHITTPLLRKLFLEAPNQWKTVTVMIQDEVARRITAQPGGKEYGSLTIFLQFFVDVHYAFKVSPGCFLPKPQVASAVVHMTVKENFPLEEPLRTKFFSLTRAAFGQRRKLLANALKDLYPKERVFEALSQLHFSDKTRPETLSLDDYLKLFYLLSLPA</sequence>
<name>RSMA_CHLAB</name>
<dbReference type="EC" id="2.1.1.182" evidence="1"/>
<dbReference type="EMBL" id="CR848038">
    <property type="protein sequence ID" value="CAH63750.1"/>
    <property type="molecule type" value="Genomic_DNA"/>
</dbReference>
<dbReference type="RefSeq" id="WP_011096967.1">
    <property type="nucleotide sequence ID" value="NC_004552.2"/>
</dbReference>
<dbReference type="SMR" id="Q5L6H5"/>
<dbReference type="KEGG" id="cab:CAB300"/>
<dbReference type="eggNOG" id="COG0030">
    <property type="taxonomic scope" value="Bacteria"/>
</dbReference>
<dbReference type="HOGENOM" id="CLU_041220_0_0_0"/>
<dbReference type="OrthoDB" id="9814755at2"/>
<dbReference type="Proteomes" id="UP000001012">
    <property type="component" value="Chromosome"/>
</dbReference>
<dbReference type="GO" id="GO:0005829">
    <property type="term" value="C:cytosol"/>
    <property type="evidence" value="ECO:0007669"/>
    <property type="project" value="TreeGrafter"/>
</dbReference>
<dbReference type="GO" id="GO:0052908">
    <property type="term" value="F:16S rRNA (adenine(1518)-N(6)/adenine(1519)-N(6))-dimethyltransferase activity"/>
    <property type="evidence" value="ECO:0007669"/>
    <property type="project" value="UniProtKB-EC"/>
</dbReference>
<dbReference type="GO" id="GO:0003723">
    <property type="term" value="F:RNA binding"/>
    <property type="evidence" value="ECO:0007669"/>
    <property type="project" value="UniProtKB-KW"/>
</dbReference>
<dbReference type="CDD" id="cd02440">
    <property type="entry name" value="AdoMet_MTases"/>
    <property type="match status" value="1"/>
</dbReference>
<dbReference type="Gene3D" id="1.10.8.100">
    <property type="entry name" value="Ribosomal RNA adenine dimethylase-like, domain 2"/>
    <property type="match status" value="1"/>
</dbReference>
<dbReference type="Gene3D" id="3.40.50.150">
    <property type="entry name" value="Vaccinia Virus protein VP39"/>
    <property type="match status" value="1"/>
</dbReference>
<dbReference type="HAMAP" id="MF_00607">
    <property type="entry name" value="16SrRNA_methyltr_A"/>
    <property type="match status" value="1"/>
</dbReference>
<dbReference type="InterPro" id="IPR001737">
    <property type="entry name" value="KsgA/Erm"/>
</dbReference>
<dbReference type="InterPro" id="IPR023165">
    <property type="entry name" value="rRNA_Ade_diMease-like_C"/>
</dbReference>
<dbReference type="InterPro" id="IPR020596">
    <property type="entry name" value="rRNA_Ade_Mease_Trfase_CS"/>
</dbReference>
<dbReference type="InterPro" id="IPR020598">
    <property type="entry name" value="rRNA_Ade_methylase_Trfase_N"/>
</dbReference>
<dbReference type="InterPro" id="IPR011530">
    <property type="entry name" value="rRNA_adenine_dimethylase"/>
</dbReference>
<dbReference type="InterPro" id="IPR029063">
    <property type="entry name" value="SAM-dependent_MTases_sf"/>
</dbReference>
<dbReference type="NCBIfam" id="TIGR00755">
    <property type="entry name" value="ksgA"/>
    <property type="match status" value="1"/>
</dbReference>
<dbReference type="PANTHER" id="PTHR11727">
    <property type="entry name" value="DIMETHYLADENOSINE TRANSFERASE"/>
    <property type="match status" value="1"/>
</dbReference>
<dbReference type="PANTHER" id="PTHR11727:SF7">
    <property type="entry name" value="DIMETHYLADENOSINE TRANSFERASE-RELATED"/>
    <property type="match status" value="1"/>
</dbReference>
<dbReference type="Pfam" id="PF00398">
    <property type="entry name" value="RrnaAD"/>
    <property type="match status" value="1"/>
</dbReference>
<dbReference type="SMART" id="SM00650">
    <property type="entry name" value="rADc"/>
    <property type="match status" value="1"/>
</dbReference>
<dbReference type="SUPFAM" id="SSF53335">
    <property type="entry name" value="S-adenosyl-L-methionine-dependent methyltransferases"/>
    <property type="match status" value="1"/>
</dbReference>
<dbReference type="PROSITE" id="PS01131">
    <property type="entry name" value="RRNA_A_DIMETH"/>
    <property type="match status" value="1"/>
</dbReference>
<dbReference type="PROSITE" id="PS51689">
    <property type="entry name" value="SAM_RNA_A_N6_MT"/>
    <property type="match status" value="1"/>
</dbReference>
<reference key="1">
    <citation type="journal article" date="2005" name="Genome Res.">
        <title>The Chlamydophila abortus genome sequence reveals an array of variable proteins that contribute to interspecies variation.</title>
        <authorList>
            <person name="Thomson N.R."/>
            <person name="Yeats C."/>
            <person name="Bell K."/>
            <person name="Holden M.T.G."/>
            <person name="Bentley S.D."/>
            <person name="Livingstone M."/>
            <person name="Cerdeno-Tarraga A.-M."/>
            <person name="Harris B."/>
            <person name="Doggett J."/>
            <person name="Ormond D."/>
            <person name="Mungall K."/>
            <person name="Clarke K."/>
            <person name="Feltwell T."/>
            <person name="Hance Z."/>
            <person name="Sanders M."/>
            <person name="Quail M.A."/>
            <person name="Price C."/>
            <person name="Barrell B.G."/>
            <person name="Parkhill J."/>
            <person name="Longbottom D."/>
        </authorList>
    </citation>
    <scope>NUCLEOTIDE SEQUENCE [LARGE SCALE GENOMIC DNA]</scope>
    <source>
        <strain>DSM 27085 / S26/3</strain>
    </source>
</reference>
<accession>Q5L6H5</accession>
<evidence type="ECO:0000255" key="1">
    <source>
        <dbReference type="HAMAP-Rule" id="MF_00607"/>
    </source>
</evidence>
<organism>
    <name type="scientific">Chlamydia abortus (strain DSM 27085 / S26/3)</name>
    <name type="common">Chlamydophila abortus</name>
    <dbReference type="NCBI Taxonomy" id="218497"/>
    <lineage>
        <taxon>Bacteria</taxon>
        <taxon>Pseudomonadati</taxon>
        <taxon>Chlamydiota</taxon>
        <taxon>Chlamydiia</taxon>
        <taxon>Chlamydiales</taxon>
        <taxon>Chlamydiaceae</taxon>
        <taxon>Chlamydia/Chlamydophila group</taxon>
        <taxon>Chlamydia</taxon>
    </lineage>
</organism>
<comment type="function">
    <text evidence="1">Specifically dimethylates two adjacent adenosines (A1518 and A1519) in the loop of a conserved hairpin near the 3'-end of 16S rRNA in the 30S particle. May play a critical role in biogenesis of 30S subunits.</text>
</comment>
<comment type="catalytic activity">
    <reaction evidence="1">
        <text>adenosine(1518)/adenosine(1519) in 16S rRNA + 4 S-adenosyl-L-methionine = N(6)-dimethyladenosine(1518)/N(6)-dimethyladenosine(1519) in 16S rRNA + 4 S-adenosyl-L-homocysteine + 4 H(+)</text>
        <dbReference type="Rhea" id="RHEA:19609"/>
        <dbReference type="Rhea" id="RHEA-COMP:10232"/>
        <dbReference type="Rhea" id="RHEA-COMP:10233"/>
        <dbReference type="ChEBI" id="CHEBI:15378"/>
        <dbReference type="ChEBI" id="CHEBI:57856"/>
        <dbReference type="ChEBI" id="CHEBI:59789"/>
        <dbReference type="ChEBI" id="CHEBI:74411"/>
        <dbReference type="ChEBI" id="CHEBI:74493"/>
        <dbReference type="EC" id="2.1.1.182"/>
    </reaction>
</comment>
<comment type="subcellular location">
    <subcellularLocation>
        <location evidence="1">Cytoplasm</location>
    </subcellularLocation>
</comment>
<comment type="similarity">
    <text evidence="1">Belongs to the class I-like SAM-binding methyltransferase superfamily. rRNA adenine N(6)-methyltransferase family. RsmA subfamily.</text>
</comment>
<keyword id="KW-0963">Cytoplasm</keyword>
<keyword id="KW-0489">Methyltransferase</keyword>
<keyword id="KW-0694">RNA-binding</keyword>
<keyword id="KW-0698">rRNA processing</keyword>
<keyword id="KW-0949">S-adenosyl-L-methionine</keyword>
<keyword id="KW-0808">Transferase</keyword>